<reference key="1">
    <citation type="journal article" date="1993" name="Mol. Gen. Genet.">
        <title>Identification of a new class of nitrogen fixation genes in Rhodobacter capsulatus: a putative membrane complex involved in electron transport to nitrogenase.</title>
        <authorList>
            <person name="Schmehl M."/>
            <person name="Jahn A."/>
            <person name="Meyer zu Vilsendorf A."/>
            <person name="Hennecke S."/>
            <person name="Masepohl B."/>
            <person name="Schuppler M."/>
            <person name="Marxer M."/>
            <person name="Oelze J."/>
            <person name="Klipp W."/>
        </authorList>
    </citation>
    <scope>NUCLEOTIDE SEQUENCE [GENOMIC DNA]</scope>
    <scope>FUNCTION</scope>
    <source>
        <strain>B10S</strain>
    </source>
</reference>
<name>APBEF_RHOCA</name>
<feature type="chain" id="PRO_0000097379" description="FAD:protein FMN transferase">
    <location>
        <begin position="1"/>
        <end position="523"/>
    </location>
</feature>
<feature type="transmembrane region" description="Helical" evidence="3">
    <location>
        <begin position="88"/>
        <end position="108"/>
    </location>
</feature>
<feature type="transmembrane region" description="Helical" evidence="3">
    <location>
        <begin position="118"/>
        <end position="138"/>
    </location>
</feature>
<feature type="transmembrane region" description="Helical" evidence="3">
    <location>
        <begin position="169"/>
        <end position="189"/>
    </location>
</feature>
<feature type="binding site" evidence="2">
    <location>
        <begin position="277"/>
        <end position="279"/>
    </location>
    <ligand>
        <name>FAD</name>
        <dbReference type="ChEBI" id="CHEBI:57692"/>
    </ligand>
</feature>
<feature type="binding site" evidence="2">
    <location>
        <position position="336"/>
    </location>
    <ligand>
        <name>FAD</name>
        <dbReference type="ChEBI" id="CHEBI:57692"/>
    </ligand>
</feature>
<feature type="binding site" evidence="2">
    <location>
        <position position="339"/>
    </location>
    <ligand>
        <name>Mg(2+)</name>
        <dbReference type="ChEBI" id="CHEBI:18420"/>
    </ligand>
</feature>
<feature type="binding site" evidence="2">
    <location>
        <position position="342"/>
    </location>
    <ligand>
        <name>FAD</name>
        <dbReference type="ChEBI" id="CHEBI:57692"/>
    </ligand>
</feature>
<feature type="binding site" evidence="2">
    <location>
        <begin position="423"/>
        <end position="425"/>
    </location>
    <ligand>
        <name>FAD</name>
        <dbReference type="ChEBI" id="CHEBI:57692"/>
    </ligand>
</feature>
<feature type="binding site" evidence="2">
    <location>
        <position position="450"/>
    </location>
    <ligand>
        <name>Mg(2+)</name>
        <dbReference type="ChEBI" id="CHEBI:18420"/>
    </ligand>
</feature>
<feature type="binding site" evidence="2">
    <location>
        <position position="454"/>
    </location>
    <ligand>
        <name>Mg(2+)</name>
        <dbReference type="ChEBI" id="CHEBI:18420"/>
    </ligand>
</feature>
<organism>
    <name type="scientific">Rhodobacter capsulatus</name>
    <name type="common">Rhodopseudomonas capsulata</name>
    <dbReference type="NCBI Taxonomy" id="1061"/>
    <lineage>
        <taxon>Bacteria</taxon>
        <taxon>Pseudomonadati</taxon>
        <taxon>Pseudomonadota</taxon>
        <taxon>Alphaproteobacteria</taxon>
        <taxon>Rhodobacterales</taxon>
        <taxon>Rhodobacter group</taxon>
        <taxon>Rhodobacter</taxon>
    </lineage>
</organism>
<keyword id="KW-1003">Cell membrane</keyword>
<keyword id="KW-0274">FAD</keyword>
<keyword id="KW-0285">Flavoprotein</keyword>
<keyword id="KW-0460">Magnesium</keyword>
<keyword id="KW-0472">Membrane</keyword>
<keyword id="KW-0479">Metal-binding</keyword>
<keyword id="KW-0535">Nitrogen fixation</keyword>
<keyword id="KW-0808">Transferase</keyword>
<keyword id="KW-0812">Transmembrane</keyword>
<keyword id="KW-1133">Transmembrane helix</keyword>
<protein>
    <recommendedName>
        <fullName evidence="1">FAD:protein FMN transferase</fullName>
        <ecNumber evidence="1">2.7.1.180</ecNumber>
    </recommendedName>
    <alternativeName>
        <fullName evidence="1">Flavin transferase</fullName>
    </alternativeName>
    <alternativeName>
        <fullName evidence="5">Nitrogen fixation protein RnfF</fullName>
    </alternativeName>
</protein>
<proteinExistence type="inferred from homology"/>
<evidence type="ECO:0000250" key="1">
    <source>
        <dbReference type="UniProtKB" id="A5F5Y3"/>
    </source>
</evidence>
<evidence type="ECO:0000250" key="2">
    <source>
        <dbReference type="UniProtKB" id="O83774"/>
    </source>
</evidence>
<evidence type="ECO:0000255" key="3"/>
<evidence type="ECO:0000269" key="4">
    <source>
    </source>
</evidence>
<evidence type="ECO:0000303" key="5">
    <source>
    </source>
</evidence>
<evidence type="ECO:0000305" key="6"/>
<accession>Q52718</accession>
<dbReference type="EC" id="2.7.1.180" evidence="1"/>
<dbReference type="EMBL" id="X72888">
    <property type="protein sequence ID" value="CAA51405.1"/>
    <property type="molecule type" value="Genomic_DNA"/>
</dbReference>
<dbReference type="PIR" id="S39899">
    <property type="entry name" value="S39899"/>
</dbReference>
<dbReference type="SMR" id="Q52718"/>
<dbReference type="GO" id="GO:0005886">
    <property type="term" value="C:plasma membrane"/>
    <property type="evidence" value="ECO:0007669"/>
    <property type="project" value="UniProtKB-SubCell"/>
</dbReference>
<dbReference type="GO" id="GO:0046872">
    <property type="term" value="F:metal ion binding"/>
    <property type="evidence" value="ECO:0007669"/>
    <property type="project" value="UniProtKB-KW"/>
</dbReference>
<dbReference type="GO" id="GO:0016740">
    <property type="term" value="F:transferase activity"/>
    <property type="evidence" value="ECO:0007669"/>
    <property type="project" value="UniProtKB-KW"/>
</dbReference>
<dbReference type="GO" id="GO:0009399">
    <property type="term" value="P:nitrogen fixation"/>
    <property type="evidence" value="ECO:0007669"/>
    <property type="project" value="UniProtKB-KW"/>
</dbReference>
<dbReference type="Gene3D" id="3.10.520.10">
    <property type="entry name" value="ApbE-like domains"/>
    <property type="match status" value="1"/>
</dbReference>
<dbReference type="InterPro" id="IPR024932">
    <property type="entry name" value="ApbE"/>
</dbReference>
<dbReference type="InterPro" id="IPR003374">
    <property type="entry name" value="ApbE-like_sf"/>
</dbReference>
<dbReference type="PANTHER" id="PTHR30040:SF2">
    <property type="entry name" value="FAD:PROTEIN FMN TRANSFERASE"/>
    <property type="match status" value="1"/>
</dbReference>
<dbReference type="PANTHER" id="PTHR30040">
    <property type="entry name" value="THIAMINE BIOSYNTHESIS LIPOPROTEIN APBE"/>
    <property type="match status" value="1"/>
</dbReference>
<dbReference type="Pfam" id="PF02424">
    <property type="entry name" value="ApbE"/>
    <property type="match status" value="1"/>
</dbReference>
<dbReference type="Pfam" id="PF04246">
    <property type="entry name" value="RseC_MucC"/>
    <property type="match status" value="1"/>
</dbReference>
<dbReference type="SUPFAM" id="SSF143631">
    <property type="entry name" value="ApbE-like"/>
    <property type="match status" value="1"/>
</dbReference>
<comment type="function">
    <text evidence="1 4 6">Flavin transferase that catalyzes the transfer of the FMN moiety of FAD and its covalent binding to the hydroxyl group of a threonine residue in a target flavoprotein (By similarity). Is likely involved in the modification of RnfG and RnfD. Required for nitrogen fixation (PubMed:8264535).</text>
</comment>
<comment type="catalytic activity">
    <reaction evidence="1">
        <text>L-threonyl-[protein] + FAD = FMN-L-threonyl-[protein] + AMP + H(+)</text>
        <dbReference type="Rhea" id="RHEA:36847"/>
        <dbReference type="Rhea" id="RHEA-COMP:11060"/>
        <dbReference type="Rhea" id="RHEA-COMP:11061"/>
        <dbReference type="ChEBI" id="CHEBI:15378"/>
        <dbReference type="ChEBI" id="CHEBI:30013"/>
        <dbReference type="ChEBI" id="CHEBI:57692"/>
        <dbReference type="ChEBI" id="CHEBI:74257"/>
        <dbReference type="ChEBI" id="CHEBI:456215"/>
        <dbReference type="EC" id="2.7.1.180"/>
    </reaction>
</comment>
<comment type="cofactor">
    <cofactor evidence="1">
        <name>Mg(2+)</name>
        <dbReference type="ChEBI" id="CHEBI:18420"/>
    </cofactor>
</comment>
<comment type="subcellular location">
    <subcellularLocation>
        <location evidence="3">Cell membrane</location>
        <topology evidence="3">Multi-pass membrane protein</topology>
    </subcellularLocation>
</comment>
<comment type="similarity">
    <text evidence="6">In the N-terminal section; belongs to the RseC family.</text>
</comment>
<comment type="similarity">
    <text evidence="6">In the C-terminal section; belongs to the ApbE family.</text>
</comment>
<gene>
    <name evidence="5" type="primary">rnfF</name>
</gene>
<sequence>MTGCCDDGPATGPRDLRERLRVVAVRGESLVVAADRASACAACAEAKGCGTRALMSMHRTDLMTIARPAGLIVAPGDEVEVAMSGNNLLAGAGLAYLLPALAFVVALALASGAGLSDGGAALVGGVVLMFSFLPLVLLEAARGCRGRCRCSTCIRGTADDGRRAAFRTGLALAAGLVLAGGVRVLTAPAPDVSETFYVFGTLLEVETHGVPEAQARDAMAVLGAHFRQMHRDWHAWAPGELESLNAAMAAGQSFEVDPGLAKLLQQGRDLACRSEGLFDPAVGGMVEAWGFHADTPPEAIRSDAVVAKLLAGAPKMTDLTITGTTVRSSNPAVQLDLGAYAKGAALDLAEADLTAAGIRDAVLNAGGGVQVLGDHGSRPWRVAIRDPFEWGVVGAVSLRPGEALHTSGNYERYFDRGGIRFSHIIDPRTARPMRGVVSVSVLSDNGALSDAAATALCVAGEEDWPRIAAQMGVRAVLRITDDGSIFATPEMRARLEAVEGGFPAPITVVDLPKDVAIPLCPEG</sequence>